<accession>Q2J3G8</accession>
<evidence type="ECO:0000255" key="1">
    <source>
        <dbReference type="HAMAP-Rule" id="MF_00487"/>
    </source>
</evidence>
<gene>
    <name evidence="1" type="primary">mdh</name>
    <name type="ordered locus">RPB_0281</name>
</gene>
<keyword id="KW-0520">NAD</keyword>
<keyword id="KW-0560">Oxidoreductase</keyword>
<keyword id="KW-1185">Reference proteome</keyword>
<keyword id="KW-0816">Tricarboxylic acid cycle</keyword>
<sequence>MARDKIALIGSGQIGGTLAHMIGLKELGDVVLFDIAEGVPQGKALDIAESSPVDGFDANFTGANSYEAIEGASVVIVTAGVPRKPGMSRDDLLSINLKVMEQVGAGIKKYAPDAFVICITNPLDAMVWALQKASGMPAKKVVGMAGVLDSARFRYFLADEFNVSVEDVTAFVLGGHGDTMVPLVKYSTVAGIPLPDLVKMGWTSQARLDEIVDRTRNGGAEIVNLLKTGSAFYAPAASAIAMAESYLRDKKRVLPVAAYLNGEYGVKDMYVGVPVVIGAKGVERIVEIEMAGKDREAFDKSVGAVQGLVDACKKIAPDLLGR</sequence>
<reference key="1">
    <citation type="submission" date="2006-01" db="EMBL/GenBank/DDBJ databases">
        <title>Complete sequence of Rhodopseudomonas palustris HaA2.</title>
        <authorList>
            <consortium name="US DOE Joint Genome Institute"/>
            <person name="Copeland A."/>
            <person name="Lucas S."/>
            <person name="Lapidus A."/>
            <person name="Barry K."/>
            <person name="Detter J.C."/>
            <person name="Glavina T."/>
            <person name="Hammon N."/>
            <person name="Israni S."/>
            <person name="Pitluck S."/>
            <person name="Chain P."/>
            <person name="Malfatti S."/>
            <person name="Shin M."/>
            <person name="Vergez L."/>
            <person name="Schmutz J."/>
            <person name="Larimer F."/>
            <person name="Land M."/>
            <person name="Hauser L."/>
            <person name="Pelletier D.A."/>
            <person name="Kyrpides N."/>
            <person name="Anderson I."/>
            <person name="Oda Y."/>
            <person name="Harwood C.S."/>
            <person name="Richardson P."/>
        </authorList>
    </citation>
    <scope>NUCLEOTIDE SEQUENCE [LARGE SCALE GENOMIC DNA]</scope>
    <source>
        <strain>HaA2</strain>
    </source>
</reference>
<comment type="function">
    <text evidence="1">Catalyzes the reversible oxidation of malate to oxaloacetate.</text>
</comment>
<comment type="catalytic activity">
    <reaction evidence="1">
        <text>(S)-malate + NAD(+) = oxaloacetate + NADH + H(+)</text>
        <dbReference type="Rhea" id="RHEA:21432"/>
        <dbReference type="ChEBI" id="CHEBI:15378"/>
        <dbReference type="ChEBI" id="CHEBI:15589"/>
        <dbReference type="ChEBI" id="CHEBI:16452"/>
        <dbReference type="ChEBI" id="CHEBI:57540"/>
        <dbReference type="ChEBI" id="CHEBI:57945"/>
        <dbReference type="EC" id="1.1.1.37"/>
    </reaction>
</comment>
<comment type="similarity">
    <text evidence="1">Belongs to the LDH/MDH superfamily. MDH type 3 family.</text>
</comment>
<organism>
    <name type="scientific">Rhodopseudomonas palustris (strain HaA2)</name>
    <dbReference type="NCBI Taxonomy" id="316058"/>
    <lineage>
        <taxon>Bacteria</taxon>
        <taxon>Pseudomonadati</taxon>
        <taxon>Pseudomonadota</taxon>
        <taxon>Alphaproteobacteria</taxon>
        <taxon>Hyphomicrobiales</taxon>
        <taxon>Nitrobacteraceae</taxon>
        <taxon>Rhodopseudomonas</taxon>
    </lineage>
</organism>
<protein>
    <recommendedName>
        <fullName evidence="1">Malate dehydrogenase</fullName>
        <ecNumber evidence="1">1.1.1.37</ecNumber>
    </recommendedName>
</protein>
<feature type="chain" id="PRO_0000241964" description="Malate dehydrogenase">
    <location>
        <begin position="1"/>
        <end position="322"/>
    </location>
</feature>
<feature type="active site" description="Proton acceptor" evidence="1">
    <location>
        <position position="176"/>
    </location>
</feature>
<feature type="binding site" evidence="1">
    <location>
        <begin position="10"/>
        <end position="15"/>
    </location>
    <ligand>
        <name>NAD(+)</name>
        <dbReference type="ChEBI" id="CHEBI:57540"/>
    </ligand>
</feature>
<feature type="binding site" evidence="1">
    <location>
        <position position="34"/>
    </location>
    <ligand>
        <name>NAD(+)</name>
        <dbReference type="ChEBI" id="CHEBI:57540"/>
    </ligand>
</feature>
<feature type="binding site" evidence="1">
    <location>
        <position position="83"/>
    </location>
    <ligand>
        <name>substrate</name>
    </ligand>
</feature>
<feature type="binding site" evidence="1">
    <location>
        <position position="89"/>
    </location>
    <ligand>
        <name>substrate</name>
    </ligand>
</feature>
<feature type="binding site" evidence="1">
    <location>
        <position position="96"/>
    </location>
    <ligand>
        <name>NAD(+)</name>
        <dbReference type="ChEBI" id="CHEBI:57540"/>
    </ligand>
</feature>
<feature type="binding site" evidence="1">
    <location>
        <begin position="119"/>
        <end position="121"/>
    </location>
    <ligand>
        <name>NAD(+)</name>
        <dbReference type="ChEBI" id="CHEBI:57540"/>
    </ligand>
</feature>
<feature type="binding site" evidence="1">
    <location>
        <position position="121"/>
    </location>
    <ligand>
        <name>substrate</name>
    </ligand>
</feature>
<feature type="binding site" evidence="1">
    <location>
        <position position="152"/>
    </location>
    <ligand>
        <name>substrate</name>
    </ligand>
</feature>
<dbReference type="EC" id="1.1.1.37" evidence="1"/>
<dbReference type="EMBL" id="CP000250">
    <property type="protein sequence ID" value="ABD04992.1"/>
    <property type="molecule type" value="Genomic_DNA"/>
</dbReference>
<dbReference type="RefSeq" id="WP_011439182.1">
    <property type="nucleotide sequence ID" value="NC_007778.1"/>
</dbReference>
<dbReference type="SMR" id="Q2J3G8"/>
<dbReference type="STRING" id="316058.RPB_0281"/>
<dbReference type="KEGG" id="rpb:RPB_0281"/>
<dbReference type="eggNOG" id="COG0039">
    <property type="taxonomic scope" value="Bacteria"/>
</dbReference>
<dbReference type="HOGENOM" id="CLU_045401_2_1_5"/>
<dbReference type="OrthoDB" id="9802969at2"/>
<dbReference type="Proteomes" id="UP000008809">
    <property type="component" value="Chromosome"/>
</dbReference>
<dbReference type="GO" id="GO:0004459">
    <property type="term" value="F:L-lactate dehydrogenase activity"/>
    <property type="evidence" value="ECO:0007669"/>
    <property type="project" value="TreeGrafter"/>
</dbReference>
<dbReference type="GO" id="GO:0030060">
    <property type="term" value="F:L-malate dehydrogenase (NAD+) activity"/>
    <property type="evidence" value="ECO:0007669"/>
    <property type="project" value="UniProtKB-UniRule"/>
</dbReference>
<dbReference type="GO" id="GO:0006089">
    <property type="term" value="P:lactate metabolic process"/>
    <property type="evidence" value="ECO:0007669"/>
    <property type="project" value="TreeGrafter"/>
</dbReference>
<dbReference type="GO" id="GO:0006099">
    <property type="term" value="P:tricarboxylic acid cycle"/>
    <property type="evidence" value="ECO:0007669"/>
    <property type="project" value="UniProtKB-UniRule"/>
</dbReference>
<dbReference type="CDD" id="cd01339">
    <property type="entry name" value="LDH-like_MDH"/>
    <property type="match status" value="1"/>
</dbReference>
<dbReference type="FunFam" id="3.40.50.720:FF:000018">
    <property type="entry name" value="Malate dehydrogenase"/>
    <property type="match status" value="1"/>
</dbReference>
<dbReference type="FunFam" id="3.90.110.10:FF:000004">
    <property type="entry name" value="Malate dehydrogenase"/>
    <property type="match status" value="1"/>
</dbReference>
<dbReference type="Gene3D" id="3.90.110.10">
    <property type="entry name" value="Lactate dehydrogenase/glycoside hydrolase, family 4, C-terminal"/>
    <property type="match status" value="1"/>
</dbReference>
<dbReference type="Gene3D" id="3.40.50.720">
    <property type="entry name" value="NAD(P)-binding Rossmann-like Domain"/>
    <property type="match status" value="1"/>
</dbReference>
<dbReference type="HAMAP" id="MF_00487">
    <property type="entry name" value="Malate_dehydrog_3"/>
    <property type="match status" value="1"/>
</dbReference>
<dbReference type="InterPro" id="IPR001557">
    <property type="entry name" value="L-lactate/malate_DH"/>
</dbReference>
<dbReference type="InterPro" id="IPR022383">
    <property type="entry name" value="Lactate/malate_DH_C"/>
</dbReference>
<dbReference type="InterPro" id="IPR001236">
    <property type="entry name" value="Lactate/malate_DH_N"/>
</dbReference>
<dbReference type="InterPro" id="IPR015955">
    <property type="entry name" value="Lactate_DH/Glyco_Ohase_4_C"/>
</dbReference>
<dbReference type="InterPro" id="IPR011275">
    <property type="entry name" value="Malate_DH_type3"/>
</dbReference>
<dbReference type="InterPro" id="IPR036291">
    <property type="entry name" value="NAD(P)-bd_dom_sf"/>
</dbReference>
<dbReference type="NCBIfam" id="TIGR01763">
    <property type="entry name" value="MalateDH_bact"/>
    <property type="match status" value="1"/>
</dbReference>
<dbReference type="NCBIfam" id="NF004863">
    <property type="entry name" value="PRK06223.1"/>
    <property type="match status" value="1"/>
</dbReference>
<dbReference type="PANTHER" id="PTHR43128">
    <property type="entry name" value="L-2-HYDROXYCARBOXYLATE DEHYDROGENASE (NAD(P)(+))"/>
    <property type="match status" value="1"/>
</dbReference>
<dbReference type="PANTHER" id="PTHR43128:SF16">
    <property type="entry name" value="L-LACTATE DEHYDROGENASE"/>
    <property type="match status" value="1"/>
</dbReference>
<dbReference type="Pfam" id="PF02866">
    <property type="entry name" value="Ldh_1_C"/>
    <property type="match status" value="1"/>
</dbReference>
<dbReference type="Pfam" id="PF00056">
    <property type="entry name" value="Ldh_1_N"/>
    <property type="match status" value="1"/>
</dbReference>
<dbReference type="PIRSF" id="PIRSF000102">
    <property type="entry name" value="Lac_mal_DH"/>
    <property type="match status" value="1"/>
</dbReference>
<dbReference type="PRINTS" id="PR00086">
    <property type="entry name" value="LLDHDRGNASE"/>
</dbReference>
<dbReference type="SUPFAM" id="SSF56327">
    <property type="entry name" value="LDH C-terminal domain-like"/>
    <property type="match status" value="1"/>
</dbReference>
<dbReference type="SUPFAM" id="SSF51735">
    <property type="entry name" value="NAD(P)-binding Rossmann-fold domains"/>
    <property type="match status" value="1"/>
</dbReference>
<name>MDH_RHOP2</name>
<proteinExistence type="inferred from homology"/>